<dbReference type="EC" id="2.7.1.23" evidence="1"/>
<dbReference type="EMBL" id="CP000246">
    <property type="protein sequence ID" value="ABG82497.1"/>
    <property type="molecule type" value="Genomic_DNA"/>
</dbReference>
<dbReference type="RefSeq" id="WP_003458666.1">
    <property type="nucleotide sequence ID" value="NC_008261.1"/>
</dbReference>
<dbReference type="SMR" id="Q0TPE0"/>
<dbReference type="STRING" id="195103.CPF_2071"/>
<dbReference type="PaxDb" id="195103-CPF_2071"/>
<dbReference type="KEGG" id="cpf:CPF_2071"/>
<dbReference type="eggNOG" id="COG0061">
    <property type="taxonomic scope" value="Bacteria"/>
</dbReference>
<dbReference type="HOGENOM" id="CLU_008831_0_1_9"/>
<dbReference type="Proteomes" id="UP000001823">
    <property type="component" value="Chromosome"/>
</dbReference>
<dbReference type="GO" id="GO:0005737">
    <property type="term" value="C:cytoplasm"/>
    <property type="evidence" value="ECO:0007669"/>
    <property type="project" value="UniProtKB-SubCell"/>
</dbReference>
<dbReference type="GO" id="GO:0005524">
    <property type="term" value="F:ATP binding"/>
    <property type="evidence" value="ECO:0007669"/>
    <property type="project" value="UniProtKB-KW"/>
</dbReference>
<dbReference type="GO" id="GO:0046872">
    <property type="term" value="F:metal ion binding"/>
    <property type="evidence" value="ECO:0007669"/>
    <property type="project" value="UniProtKB-UniRule"/>
</dbReference>
<dbReference type="GO" id="GO:0051287">
    <property type="term" value="F:NAD binding"/>
    <property type="evidence" value="ECO:0007669"/>
    <property type="project" value="UniProtKB-ARBA"/>
</dbReference>
<dbReference type="GO" id="GO:0003951">
    <property type="term" value="F:NAD+ kinase activity"/>
    <property type="evidence" value="ECO:0007669"/>
    <property type="project" value="UniProtKB-UniRule"/>
</dbReference>
<dbReference type="GO" id="GO:0019674">
    <property type="term" value="P:NAD metabolic process"/>
    <property type="evidence" value="ECO:0007669"/>
    <property type="project" value="InterPro"/>
</dbReference>
<dbReference type="GO" id="GO:0006741">
    <property type="term" value="P:NADP biosynthetic process"/>
    <property type="evidence" value="ECO:0007669"/>
    <property type="project" value="UniProtKB-UniRule"/>
</dbReference>
<dbReference type="Gene3D" id="3.40.50.10330">
    <property type="entry name" value="Probable inorganic polyphosphate/atp-NAD kinase, domain 1"/>
    <property type="match status" value="1"/>
</dbReference>
<dbReference type="Gene3D" id="2.60.200.30">
    <property type="entry name" value="Probable inorganic polyphosphate/atp-NAD kinase, domain 2"/>
    <property type="match status" value="1"/>
</dbReference>
<dbReference type="HAMAP" id="MF_00361">
    <property type="entry name" value="NAD_kinase"/>
    <property type="match status" value="1"/>
</dbReference>
<dbReference type="InterPro" id="IPR017438">
    <property type="entry name" value="ATP-NAD_kinase_N"/>
</dbReference>
<dbReference type="InterPro" id="IPR017437">
    <property type="entry name" value="ATP-NAD_kinase_PpnK-typ_C"/>
</dbReference>
<dbReference type="InterPro" id="IPR016064">
    <property type="entry name" value="NAD/diacylglycerol_kinase_sf"/>
</dbReference>
<dbReference type="InterPro" id="IPR002504">
    <property type="entry name" value="NADK"/>
</dbReference>
<dbReference type="PANTHER" id="PTHR20275">
    <property type="entry name" value="NAD KINASE"/>
    <property type="match status" value="1"/>
</dbReference>
<dbReference type="PANTHER" id="PTHR20275:SF0">
    <property type="entry name" value="NAD KINASE"/>
    <property type="match status" value="1"/>
</dbReference>
<dbReference type="Pfam" id="PF01513">
    <property type="entry name" value="NAD_kinase"/>
    <property type="match status" value="1"/>
</dbReference>
<dbReference type="Pfam" id="PF20143">
    <property type="entry name" value="NAD_kinase_C"/>
    <property type="match status" value="1"/>
</dbReference>
<dbReference type="SUPFAM" id="SSF111331">
    <property type="entry name" value="NAD kinase/diacylglycerol kinase-like"/>
    <property type="match status" value="1"/>
</dbReference>
<keyword id="KW-0067">ATP-binding</keyword>
<keyword id="KW-0963">Cytoplasm</keyword>
<keyword id="KW-0418">Kinase</keyword>
<keyword id="KW-0520">NAD</keyword>
<keyword id="KW-0521">NADP</keyword>
<keyword id="KW-0547">Nucleotide-binding</keyword>
<keyword id="KW-0808">Transferase</keyword>
<comment type="function">
    <text evidence="1">Involved in the regulation of the intracellular balance of NAD and NADP, and is a key enzyme in the biosynthesis of NADP. Catalyzes specifically the phosphorylation on 2'-hydroxyl of the adenosine moiety of NAD to yield NADP.</text>
</comment>
<comment type="catalytic activity">
    <reaction evidence="1">
        <text>NAD(+) + ATP = ADP + NADP(+) + H(+)</text>
        <dbReference type="Rhea" id="RHEA:18629"/>
        <dbReference type="ChEBI" id="CHEBI:15378"/>
        <dbReference type="ChEBI" id="CHEBI:30616"/>
        <dbReference type="ChEBI" id="CHEBI:57540"/>
        <dbReference type="ChEBI" id="CHEBI:58349"/>
        <dbReference type="ChEBI" id="CHEBI:456216"/>
        <dbReference type="EC" id="2.7.1.23"/>
    </reaction>
</comment>
<comment type="cofactor">
    <cofactor evidence="1">
        <name>a divalent metal cation</name>
        <dbReference type="ChEBI" id="CHEBI:60240"/>
    </cofactor>
</comment>
<comment type="subcellular location">
    <subcellularLocation>
        <location evidence="1">Cytoplasm</location>
    </subcellularLocation>
</comment>
<comment type="similarity">
    <text evidence="1">Belongs to the NAD kinase family.</text>
</comment>
<name>NADK_CLOP1</name>
<sequence length="276" mass="30947">MRNIGIIINKEKDKENEILNLVILKVKEYLNPDEIKVIDQFYKGDYKDLMALDLLIVLGGDGTLLGVARKFSTVIDTPILGINIGNLGFLVTAEISELDEALYRIKVGDYKVEERMLLSCTIEGVTCSEERALNDIVVARGTLSRMAQYEVFINDELYATFKGDGVIISTPVGSTAYSFSAGGPLIMPDLQIVSIVPICPHTPNSRPMIIDGNNKVRVKPLINESDVFVTIDGQKALKLEKHNEVLIKKAKEFFRIISFDNKSYFKVLRKKLFKIE</sequence>
<organism>
    <name type="scientific">Clostridium perfringens (strain ATCC 13124 / DSM 756 / JCM 1290 / NCIMB 6125 / NCTC 8237 / Type A)</name>
    <dbReference type="NCBI Taxonomy" id="195103"/>
    <lineage>
        <taxon>Bacteria</taxon>
        <taxon>Bacillati</taxon>
        <taxon>Bacillota</taxon>
        <taxon>Clostridia</taxon>
        <taxon>Eubacteriales</taxon>
        <taxon>Clostridiaceae</taxon>
        <taxon>Clostridium</taxon>
    </lineage>
</organism>
<reference key="1">
    <citation type="journal article" date="2006" name="Genome Res.">
        <title>Skewed genomic variability in strains of the toxigenic bacterial pathogen, Clostridium perfringens.</title>
        <authorList>
            <person name="Myers G.S.A."/>
            <person name="Rasko D.A."/>
            <person name="Cheung J.K."/>
            <person name="Ravel J."/>
            <person name="Seshadri R."/>
            <person name="DeBoy R.T."/>
            <person name="Ren Q."/>
            <person name="Varga J."/>
            <person name="Awad M.M."/>
            <person name="Brinkac L.M."/>
            <person name="Daugherty S.C."/>
            <person name="Haft D.H."/>
            <person name="Dodson R.J."/>
            <person name="Madupu R."/>
            <person name="Nelson W.C."/>
            <person name="Rosovitz M.J."/>
            <person name="Sullivan S.A."/>
            <person name="Khouri H."/>
            <person name="Dimitrov G.I."/>
            <person name="Watkins K.L."/>
            <person name="Mulligan S."/>
            <person name="Benton J."/>
            <person name="Radune D."/>
            <person name="Fisher D.J."/>
            <person name="Atkins H.S."/>
            <person name="Hiscox T."/>
            <person name="Jost B.H."/>
            <person name="Billington S.J."/>
            <person name="Songer J.G."/>
            <person name="McClane B.A."/>
            <person name="Titball R.W."/>
            <person name="Rood J.I."/>
            <person name="Melville S.B."/>
            <person name="Paulsen I.T."/>
        </authorList>
    </citation>
    <scope>NUCLEOTIDE SEQUENCE [LARGE SCALE GENOMIC DNA]</scope>
    <source>
        <strain>ATCC 13124 / DSM 756 / JCM 1290 / NCIMB 6125 / NCTC 8237 / S 107 / Type A</strain>
    </source>
</reference>
<evidence type="ECO:0000255" key="1">
    <source>
        <dbReference type="HAMAP-Rule" id="MF_00361"/>
    </source>
</evidence>
<accession>Q0TPE0</accession>
<gene>
    <name evidence="1" type="primary">nadK</name>
    <name type="ordered locus">CPF_2071</name>
</gene>
<feature type="chain" id="PRO_1000005403" description="NAD kinase">
    <location>
        <begin position="1"/>
        <end position="276"/>
    </location>
</feature>
<feature type="active site" description="Proton acceptor" evidence="1">
    <location>
        <position position="61"/>
    </location>
</feature>
<feature type="binding site" evidence="1">
    <location>
        <begin position="61"/>
        <end position="62"/>
    </location>
    <ligand>
        <name>NAD(+)</name>
        <dbReference type="ChEBI" id="CHEBI:57540"/>
    </ligand>
</feature>
<feature type="binding site" evidence="1">
    <location>
        <begin position="134"/>
        <end position="135"/>
    </location>
    <ligand>
        <name>NAD(+)</name>
        <dbReference type="ChEBI" id="CHEBI:57540"/>
    </ligand>
</feature>
<feature type="binding site" evidence="1">
    <location>
        <position position="145"/>
    </location>
    <ligand>
        <name>NAD(+)</name>
        <dbReference type="ChEBI" id="CHEBI:57540"/>
    </ligand>
</feature>
<feature type="binding site" evidence="1">
    <location>
        <position position="162"/>
    </location>
    <ligand>
        <name>NAD(+)</name>
        <dbReference type="ChEBI" id="CHEBI:57540"/>
    </ligand>
</feature>
<feature type="binding site" evidence="1">
    <location>
        <position position="164"/>
    </location>
    <ligand>
        <name>NAD(+)</name>
        <dbReference type="ChEBI" id="CHEBI:57540"/>
    </ligand>
</feature>
<feature type="binding site" evidence="1">
    <location>
        <position position="172"/>
    </location>
    <ligand>
        <name>NAD(+)</name>
        <dbReference type="ChEBI" id="CHEBI:57540"/>
    </ligand>
</feature>
<feature type="binding site" evidence="1">
    <location>
        <begin position="175"/>
        <end position="180"/>
    </location>
    <ligand>
        <name>NAD(+)</name>
        <dbReference type="ChEBI" id="CHEBI:57540"/>
    </ligand>
</feature>
<feature type="binding site" evidence="1">
    <location>
        <position position="234"/>
    </location>
    <ligand>
        <name>NAD(+)</name>
        <dbReference type="ChEBI" id="CHEBI:57540"/>
    </ligand>
</feature>
<protein>
    <recommendedName>
        <fullName evidence="1">NAD kinase</fullName>
        <ecNumber evidence="1">2.7.1.23</ecNumber>
    </recommendedName>
    <alternativeName>
        <fullName evidence="1">ATP-dependent NAD kinase</fullName>
    </alternativeName>
</protein>
<proteinExistence type="inferred from homology"/>